<name>VSR_PVSP</name>
<reference key="1">
    <citation type="journal article" date="1989" name="J. Gen. Virol.">
        <title>Organization and interviral homologies of the 3'-terminal portion of potato virus S RNA.</title>
        <authorList>
            <person name="Mackenzie D.J."/>
            <person name="Tremaine J.H."/>
            <person name="Stace-Smith R."/>
        </authorList>
    </citation>
    <scope>NUCLEOTIDE SEQUENCE [GENOMIC RNA]</scope>
</reference>
<keyword id="KW-0238">DNA-binding</keyword>
<keyword id="KW-0945">Host-virus interaction</keyword>
<keyword id="KW-1090">Inhibition of host innate immune response by virus</keyword>
<keyword id="KW-0479">Metal-binding</keyword>
<keyword id="KW-0941">Suppressor of RNA silencing</keyword>
<keyword id="KW-0899">Viral immunoevasion</keyword>
<keyword id="KW-0862">Zinc</keyword>
<keyword id="KW-0863">Zinc-finger</keyword>
<organismHost>
    <name type="scientific">Solanum tuberosum</name>
    <name type="common">Potato</name>
    <dbReference type="NCBI Taxonomy" id="4113"/>
</organismHost>
<proteinExistence type="inferred from homology"/>
<feature type="chain" id="PRO_0000222655" description="RNA silencing suppressor">
    <location>
        <begin position="1"/>
        <end position="93"/>
    </location>
</feature>
<feature type="zinc finger region" description="C4-type" evidence="2">
    <location>
        <begin position="54"/>
        <end position="69"/>
    </location>
</feature>
<feature type="region of interest" description="Basic" evidence="1">
    <location>
        <begin position="44"/>
        <end position="47"/>
    </location>
</feature>
<comment type="function">
    <text evidence="1">Suppressor of viral-induced RNA silencing. The potential mechanism of action is based on sequestering siRNAs (By similarity).</text>
</comment>
<comment type="similarity">
    <text evidence="3">Belongs to the carlaviruses nucleic acid-binding protein family.</text>
</comment>
<evidence type="ECO:0000250" key="1"/>
<evidence type="ECO:0000255" key="2"/>
<evidence type="ECO:0000305" key="3"/>
<accession>P16654</accession>
<sequence length="93" mass="10751">MKAERLEMLLLCVYRLGYILPVDVCIKIISVAQVSVQGRSTYSCKRRARSIGRCWRCYRVYPPVCNSKCDNRTCRPGISPNFKVVTFIRGWSN</sequence>
<dbReference type="EMBL" id="D00461">
    <property type="protein sequence ID" value="BAA00356.1"/>
    <property type="molecule type" value="Genomic_RNA"/>
</dbReference>
<dbReference type="PIR" id="JA0128">
    <property type="entry name" value="JA0128"/>
</dbReference>
<dbReference type="GO" id="GO:0003677">
    <property type="term" value="F:DNA binding"/>
    <property type="evidence" value="ECO:0007669"/>
    <property type="project" value="UniProtKB-KW"/>
</dbReference>
<dbReference type="GO" id="GO:0008270">
    <property type="term" value="F:zinc ion binding"/>
    <property type="evidence" value="ECO:0007669"/>
    <property type="project" value="UniProtKB-KW"/>
</dbReference>
<dbReference type="GO" id="GO:0006355">
    <property type="term" value="P:regulation of DNA-templated transcription"/>
    <property type="evidence" value="ECO:0007669"/>
    <property type="project" value="InterPro"/>
</dbReference>
<dbReference type="GO" id="GO:0052170">
    <property type="term" value="P:symbiont-mediated suppression of host innate immune response"/>
    <property type="evidence" value="ECO:0007669"/>
    <property type="project" value="UniProtKB-KW"/>
</dbReference>
<dbReference type="InterPro" id="IPR002568">
    <property type="entry name" value="Carla-bd"/>
</dbReference>
<dbReference type="Pfam" id="PF01623">
    <property type="entry name" value="Carla_C4"/>
    <property type="match status" value="1"/>
</dbReference>
<organism>
    <name type="scientific">Potato virus S (strain Peruvian)</name>
    <dbReference type="NCBI Taxonomy" id="12170"/>
    <lineage>
        <taxon>Viruses</taxon>
        <taxon>Riboviria</taxon>
        <taxon>Orthornavirae</taxon>
        <taxon>Kitrinoviricota</taxon>
        <taxon>Alsuviricetes</taxon>
        <taxon>Tymovirales</taxon>
        <taxon>Betaflexiviridae</taxon>
        <taxon>Quinvirinae</taxon>
        <taxon>Carlavirus</taxon>
        <taxon>Potato virus S</taxon>
    </lineage>
</organism>
<protein>
    <recommendedName>
        <fullName>RNA silencing suppressor</fullName>
    </recommendedName>
    <alternativeName>
        <fullName>10.7 kDa protein</fullName>
    </alternativeName>
    <alternativeName>
        <fullName>Putative nucleic acid-binding protein</fullName>
    </alternativeName>
</protein>